<feature type="chain" id="PRO_0000207964" description="Protein PsbN">
    <location>
        <begin position="1"/>
        <end position="43"/>
    </location>
</feature>
<feature type="transmembrane region" description="Helical" evidence="1">
    <location>
        <begin position="7"/>
        <end position="27"/>
    </location>
</feature>
<evidence type="ECO:0000255" key="1">
    <source>
        <dbReference type="HAMAP-Rule" id="MF_00293"/>
    </source>
</evidence>
<protein>
    <recommendedName>
        <fullName evidence="1">Protein PsbN</fullName>
    </recommendedName>
</protein>
<keyword id="KW-0150">Chloroplast</keyword>
<keyword id="KW-0472">Membrane</keyword>
<keyword id="KW-0934">Plastid</keyword>
<keyword id="KW-0793">Thylakoid</keyword>
<keyword id="KW-0812">Transmembrane</keyword>
<keyword id="KW-1133">Transmembrane helix</keyword>
<geneLocation type="chloroplast"/>
<sequence>METATLVAIFISGLLVSFTGYALYTAFGQPSQQLRDPFEEHGD</sequence>
<organism>
    <name type="scientific">Tecticornia australasica</name>
    <name type="common">Australasian samphire</name>
    <dbReference type="NCBI Taxonomy" id="224193"/>
    <lineage>
        <taxon>Eukaryota</taxon>
        <taxon>Viridiplantae</taxon>
        <taxon>Streptophyta</taxon>
        <taxon>Embryophyta</taxon>
        <taxon>Tracheophyta</taxon>
        <taxon>Spermatophyta</taxon>
        <taxon>Magnoliopsida</taxon>
        <taxon>eudicotyledons</taxon>
        <taxon>Gunneridae</taxon>
        <taxon>Pentapetalae</taxon>
        <taxon>Caryophyllales</taxon>
        <taxon>Chenopodiaceae</taxon>
        <taxon>Salicornioideae</taxon>
        <taxon>Tecticornia</taxon>
    </lineage>
</organism>
<gene>
    <name evidence="1" type="primary">psbN</name>
</gene>
<proteinExistence type="inferred from homology"/>
<name>PSBN_TECAU</name>
<comment type="function">
    <text evidence="1">May play a role in photosystem I and II biogenesis.</text>
</comment>
<comment type="subcellular location">
    <subcellularLocation>
        <location evidence="1">Plastid</location>
        <location evidence="1">Chloroplast thylakoid membrane</location>
        <topology evidence="1">Single-pass membrane protein</topology>
    </subcellularLocation>
</comment>
<comment type="similarity">
    <text evidence="1">Belongs to the PsbN family.</text>
</comment>
<comment type="caution">
    <text evidence="1">Originally thought to be a component of PSII; based on experiments in Synechocystis, N.tabacum and barley, and its absence from PSII in T.elongatus and T.vulcanus, this is probably not true.</text>
</comment>
<reference key="1">
    <citation type="journal article" date="2003" name="Plant Syst. Evol.">
        <title>An integrated molecular and morphological study of the subfamily Suaedoideae Ulbr. (Chenopodiaceae).</title>
        <authorList>
            <person name="Schuetze P."/>
            <person name="Freitag H."/>
            <person name="Weising K."/>
        </authorList>
    </citation>
    <scope>NUCLEOTIDE SEQUENCE [GENOMIC DNA]</scope>
</reference>
<dbReference type="EMBL" id="AY181939">
    <property type="protein sequence ID" value="AAO66176.1"/>
    <property type="molecule type" value="Genomic_DNA"/>
</dbReference>
<dbReference type="SMR" id="Q7GZA5"/>
<dbReference type="GO" id="GO:0009535">
    <property type="term" value="C:chloroplast thylakoid membrane"/>
    <property type="evidence" value="ECO:0007669"/>
    <property type="project" value="UniProtKB-SubCell"/>
</dbReference>
<dbReference type="GO" id="GO:0015979">
    <property type="term" value="P:photosynthesis"/>
    <property type="evidence" value="ECO:0007669"/>
    <property type="project" value="InterPro"/>
</dbReference>
<dbReference type="HAMAP" id="MF_00293">
    <property type="entry name" value="PSII_PsbN"/>
    <property type="match status" value="1"/>
</dbReference>
<dbReference type="InterPro" id="IPR003398">
    <property type="entry name" value="PSII_PsbN"/>
</dbReference>
<dbReference type="PANTHER" id="PTHR35326">
    <property type="entry name" value="PROTEIN PSBN"/>
    <property type="match status" value="1"/>
</dbReference>
<dbReference type="PANTHER" id="PTHR35326:SF3">
    <property type="entry name" value="PROTEIN PSBN"/>
    <property type="match status" value="1"/>
</dbReference>
<dbReference type="Pfam" id="PF02468">
    <property type="entry name" value="PsbN"/>
    <property type="match status" value="1"/>
</dbReference>
<accession>Q7GZA5</accession>